<accession>P50206</accession>
<name>BPHB_PSES1</name>
<dbReference type="EC" id="1.3.1.56"/>
<dbReference type="EMBL" id="D17319">
    <property type="protein sequence ID" value="BAA04140.1"/>
    <property type="molecule type" value="Genomic_DNA"/>
</dbReference>
<dbReference type="PIR" id="JC2441">
    <property type="entry name" value="JC2441"/>
</dbReference>
<dbReference type="SMR" id="P50206"/>
<dbReference type="UniPathway" id="UPA00155">
    <property type="reaction ID" value="UER00251"/>
</dbReference>
<dbReference type="GO" id="GO:0018509">
    <property type="term" value="F:cis-2,3-dihydrobiphenyl-2,3-diol dehydrogenase activity"/>
    <property type="evidence" value="ECO:0007669"/>
    <property type="project" value="UniProtKB-EC"/>
</dbReference>
<dbReference type="GO" id="GO:0050664">
    <property type="term" value="F:oxidoreductase activity, acting on NAD(P)H, oxygen as acceptor"/>
    <property type="evidence" value="ECO:0007669"/>
    <property type="project" value="TreeGrafter"/>
</dbReference>
<dbReference type="GO" id="GO:0009056">
    <property type="term" value="P:catabolic process"/>
    <property type="evidence" value="ECO:0007669"/>
    <property type="project" value="UniProtKB-KW"/>
</dbReference>
<dbReference type="CDD" id="cd05348">
    <property type="entry name" value="BphB-like_SDR_c"/>
    <property type="match status" value="1"/>
</dbReference>
<dbReference type="FunFam" id="3.40.50.720:FF:000084">
    <property type="entry name" value="Short-chain dehydrogenase reductase"/>
    <property type="match status" value="1"/>
</dbReference>
<dbReference type="Gene3D" id="3.40.50.720">
    <property type="entry name" value="NAD(P)-binding Rossmann-like Domain"/>
    <property type="match status" value="1"/>
</dbReference>
<dbReference type="InterPro" id="IPR047950">
    <property type="entry name" value="BphB-like_SDR"/>
</dbReference>
<dbReference type="InterPro" id="IPR017711">
    <property type="entry name" value="BphB_TodD"/>
</dbReference>
<dbReference type="InterPro" id="IPR036291">
    <property type="entry name" value="NAD(P)-bd_dom_sf"/>
</dbReference>
<dbReference type="InterPro" id="IPR020904">
    <property type="entry name" value="Sc_DH/Rdtase_CS"/>
</dbReference>
<dbReference type="InterPro" id="IPR002347">
    <property type="entry name" value="SDR_fam"/>
</dbReference>
<dbReference type="NCBIfam" id="TIGR03325">
    <property type="entry name" value="BphB_TodD"/>
    <property type="match status" value="1"/>
</dbReference>
<dbReference type="NCBIfam" id="NF004849">
    <property type="entry name" value="PRK06200.1"/>
    <property type="match status" value="1"/>
</dbReference>
<dbReference type="PANTHER" id="PTHR43008">
    <property type="entry name" value="BENZIL REDUCTASE"/>
    <property type="match status" value="1"/>
</dbReference>
<dbReference type="PANTHER" id="PTHR43008:SF4">
    <property type="entry name" value="CHAIN DEHYDROGENASE, PUTATIVE (AFU_ORTHOLOGUE AFUA_4G08710)-RELATED"/>
    <property type="match status" value="1"/>
</dbReference>
<dbReference type="Pfam" id="PF00106">
    <property type="entry name" value="adh_short"/>
    <property type="match status" value="1"/>
</dbReference>
<dbReference type="PRINTS" id="PR00081">
    <property type="entry name" value="GDHRDH"/>
</dbReference>
<dbReference type="PRINTS" id="PR00080">
    <property type="entry name" value="SDRFAMILY"/>
</dbReference>
<dbReference type="SUPFAM" id="SSF51735">
    <property type="entry name" value="NAD(P)-binding Rossmann-fold domains"/>
    <property type="match status" value="1"/>
</dbReference>
<dbReference type="PROSITE" id="PS00061">
    <property type="entry name" value="ADH_SHORT"/>
    <property type="match status" value="1"/>
</dbReference>
<reference key="1">
    <citation type="journal article" date="1994" name="Biochem. Biophys. Res. Commun.">
        <title>Identification of the bphA and bphB genes of Pseudomonas sp. strains KKS102 involved in degradation of biphenyl and polychlorinated biphenyls.</title>
        <authorList>
            <person name="Fukuda M."/>
            <person name="Yasukochi Y."/>
            <person name="Kikuchi Y."/>
            <person name="Nagata Y."/>
            <person name="Kimbara K."/>
            <person name="Horiuchi H."/>
            <person name="Takagi M."/>
            <person name="Yano K."/>
        </authorList>
    </citation>
    <scope>NUCLEOTIDE SEQUENCE [GENOMIC DNA]</scope>
</reference>
<sequence>MQLNNEVALVTGGGSGLGRAIVDRFVAEGARVAVLDKSAARLQELQAAHGAKVLGIEGDVRVLADHQKAARECVAAFGKIDCLIPNAGIWDYSMPLVDIPDDRIDAAFDEVFHINVKGYLLAVKACLPALVQSRGSVVFTISNAGFYPNGGGPLYTGAKHAVVGMVRELAYELAPHVRVNGVAPGGMSTDLRGPASLGMANQAISSVPLGEMLTSVLPVGRMPVRAEYTGAYVFFATRGDTFPTTGALLNHDGGMGVRGFFEATGGKDLPQKLRLS</sequence>
<feature type="chain" id="PRO_0000054534" description="Cis-2,3-dihydrobiphenyl-2,3-diol dehydrogenase">
    <location>
        <begin position="1"/>
        <end position="276"/>
    </location>
</feature>
<feature type="active site" description="Proton acceptor" evidence="2">
    <location>
        <position position="155"/>
    </location>
</feature>
<feature type="binding site" evidence="1">
    <location>
        <begin position="9"/>
        <end position="33"/>
    </location>
    <ligand>
        <name>NAD(+)</name>
        <dbReference type="ChEBI" id="CHEBI:57540"/>
    </ligand>
</feature>
<feature type="binding site" evidence="1">
    <location>
        <position position="142"/>
    </location>
    <ligand>
        <name>substrate</name>
    </ligand>
</feature>
<protein>
    <recommendedName>
        <fullName>Cis-2,3-dihydrobiphenyl-2,3-diol dehydrogenase</fullName>
        <ecNumber>1.3.1.56</ecNumber>
    </recommendedName>
    <alternativeName>
        <fullName>2,3-dihydro-2,3-dihydroxybiphenyl dehydrogenase</fullName>
    </alternativeName>
    <alternativeName>
        <fullName>2,3-dihydroxy-4-phenylhexa-4,6-diene dehydrogenase</fullName>
    </alternativeName>
    <alternativeName>
        <fullName>Biphenyl-2,3-dihydro-2,3-diol dehydrogenase</fullName>
    </alternativeName>
    <alternativeName>
        <fullName>Biphenyl-cis-diol dehydrogenase</fullName>
    </alternativeName>
</protein>
<proteinExistence type="inferred from homology"/>
<evidence type="ECO:0000250" key="1"/>
<evidence type="ECO:0000255" key="2">
    <source>
        <dbReference type="PROSITE-ProRule" id="PRU10001"/>
    </source>
</evidence>
<evidence type="ECO:0000305" key="3"/>
<keyword id="KW-0058">Aromatic hydrocarbons catabolism</keyword>
<keyword id="KW-0520">NAD</keyword>
<keyword id="KW-0560">Oxidoreductase</keyword>
<comment type="catalytic activity">
    <reaction>
        <text>(2R,3S)-3-phenylcyclohexa-3,5-diene-1,2-diol + NAD(+) = biphenyl-2,3-diol + NADH + H(+)</text>
        <dbReference type="Rhea" id="RHEA:17033"/>
        <dbReference type="ChEBI" id="CHEBI:15378"/>
        <dbReference type="ChEBI" id="CHEBI:16205"/>
        <dbReference type="ChEBI" id="CHEBI:32922"/>
        <dbReference type="ChEBI" id="CHEBI:57540"/>
        <dbReference type="ChEBI" id="CHEBI:57945"/>
        <dbReference type="EC" id="1.3.1.56"/>
    </reaction>
</comment>
<comment type="pathway">
    <text>Xenobiotic degradation; biphenyl degradation; 2-hydroxy-2,4-pentadienoate and benzoate from biphenyl: step 2/4.</text>
</comment>
<comment type="similarity">
    <text evidence="3">Belongs to the short-chain dehydrogenases/reductases (SDR) family.</text>
</comment>
<organism>
    <name type="scientific">Pseudomonas sp. (strain KKS102)</name>
    <dbReference type="NCBI Taxonomy" id="307"/>
    <lineage>
        <taxon>Bacteria</taxon>
        <taxon>Pseudomonadati</taxon>
        <taxon>Pseudomonadota</taxon>
    </lineage>
</organism>
<gene>
    <name type="primary">bphB</name>
</gene>